<comment type="function">
    <text evidence="1">Part of the ABC transporter complex RbsABC involved in ribose import. Responsible for energy coupling to the transport system.</text>
</comment>
<comment type="catalytic activity">
    <reaction evidence="1">
        <text>D-ribose(out) + ATP + H2O = D-ribose(in) + ADP + phosphate + H(+)</text>
        <dbReference type="Rhea" id="RHEA:29903"/>
        <dbReference type="ChEBI" id="CHEBI:15377"/>
        <dbReference type="ChEBI" id="CHEBI:15378"/>
        <dbReference type="ChEBI" id="CHEBI:30616"/>
        <dbReference type="ChEBI" id="CHEBI:43474"/>
        <dbReference type="ChEBI" id="CHEBI:47013"/>
        <dbReference type="ChEBI" id="CHEBI:456216"/>
        <dbReference type="EC" id="7.5.2.7"/>
    </reaction>
</comment>
<comment type="subunit">
    <text evidence="1">The complex is composed of an ATP-binding protein (RbsA), two transmembrane proteins (RbsC) and a solute-binding protein (RbsB).</text>
</comment>
<comment type="subcellular location">
    <subcellularLocation>
        <location evidence="1">Cell membrane</location>
        <topology evidence="1">Peripheral membrane protein</topology>
    </subcellularLocation>
</comment>
<comment type="similarity">
    <text evidence="1">Belongs to the ABC transporter superfamily. Ribose importer (TC 3.A.1.2.1) family.</text>
</comment>
<dbReference type="EC" id="7.5.2.7" evidence="1"/>
<dbReference type="EMBL" id="CP000358">
    <property type="protein sequence ID" value="ABF43892.1"/>
    <property type="molecule type" value="Genomic_DNA"/>
</dbReference>
<dbReference type="RefSeq" id="WP_011525598.1">
    <property type="nucleotide sequence ID" value="NC_008010.2"/>
</dbReference>
<dbReference type="SMR" id="Q1J3P2"/>
<dbReference type="KEGG" id="dge:Dgeo_2458"/>
<dbReference type="eggNOG" id="COG1129">
    <property type="taxonomic scope" value="Bacteria"/>
</dbReference>
<dbReference type="HOGENOM" id="CLU_000604_92_3_0"/>
<dbReference type="Proteomes" id="UP000002431">
    <property type="component" value="Plasmid pDGEO01"/>
</dbReference>
<dbReference type="GO" id="GO:0005886">
    <property type="term" value="C:plasma membrane"/>
    <property type="evidence" value="ECO:0007669"/>
    <property type="project" value="UniProtKB-SubCell"/>
</dbReference>
<dbReference type="GO" id="GO:0015611">
    <property type="term" value="F:ABC-type D-ribose transporter activity"/>
    <property type="evidence" value="ECO:0007669"/>
    <property type="project" value="UniProtKB-EC"/>
</dbReference>
<dbReference type="GO" id="GO:0005524">
    <property type="term" value="F:ATP binding"/>
    <property type="evidence" value="ECO:0007669"/>
    <property type="project" value="UniProtKB-KW"/>
</dbReference>
<dbReference type="GO" id="GO:0016887">
    <property type="term" value="F:ATP hydrolysis activity"/>
    <property type="evidence" value="ECO:0007669"/>
    <property type="project" value="InterPro"/>
</dbReference>
<dbReference type="CDD" id="cd03216">
    <property type="entry name" value="ABC_Carb_Monos_I"/>
    <property type="match status" value="1"/>
</dbReference>
<dbReference type="CDD" id="cd03215">
    <property type="entry name" value="ABC_Carb_Monos_II"/>
    <property type="match status" value="1"/>
</dbReference>
<dbReference type="FunFam" id="3.40.50.300:FF:000127">
    <property type="entry name" value="Ribose import ATP-binding protein RbsA"/>
    <property type="match status" value="1"/>
</dbReference>
<dbReference type="Gene3D" id="3.40.50.300">
    <property type="entry name" value="P-loop containing nucleotide triphosphate hydrolases"/>
    <property type="match status" value="2"/>
</dbReference>
<dbReference type="InterPro" id="IPR003593">
    <property type="entry name" value="AAA+_ATPase"/>
</dbReference>
<dbReference type="InterPro" id="IPR050107">
    <property type="entry name" value="ABC_carbohydrate_import_ATPase"/>
</dbReference>
<dbReference type="InterPro" id="IPR003439">
    <property type="entry name" value="ABC_transporter-like_ATP-bd"/>
</dbReference>
<dbReference type="InterPro" id="IPR017871">
    <property type="entry name" value="ABC_transporter-like_CS"/>
</dbReference>
<dbReference type="InterPro" id="IPR027417">
    <property type="entry name" value="P-loop_NTPase"/>
</dbReference>
<dbReference type="PANTHER" id="PTHR43790">
    <property type="entry name" value="CARBOHYDRATE TRANSPORT ATP-BINDING PROTEIN MG119-RELATED"/>
    <property type="match status" value="1"/>
</dbReference>
<dbReference type="PANTHER" id="PTHR43790:SF3">
    <property type="entry name" value="D-ALLOSE IMPORT ATP-BINDING PROTEIN ALSA-RELATED"/>
    <property type="match status" value="1"/>
</dbReference>
<dbReference type="Pfam" id="PF00005">
    <property type="entry name" value="ABC_tran"/>
    <property type="match status" value="2"/>
</dbReference>
<dbReference type="SMART" id="SM00382">
    <property type="entry name" value="AAA"/>
    <property type="match status" value="2"/>
</dbReference>
<dbReference type="SUPFAM" id="SSF52540">
    <property type="entry name" value="P-loop containing nucleoside triphosphate hydrolases"/>
    <property type="match status" value="2"/>
</dbReference>
<dbReference type="PROSITE" id="PS00211">
    <property type="entry name" value="ABC_TRANSPORTER_1"/>
    <property type="match status" value="1"/>
</dbReference>
<dbReference type="PROSITE" id="PS50893">
    <property type="entry name" value="ABC_TRANSPORTER_2"/>
    <property type="match status" value="2"/>
</dbReference>
<dbReference type="PROSITE" id="PS51254">
    <property type="entry name" value="RBSA"/>
    <property type="match status" value="1"/>
</dbReference>
<keyword id="KW-0067">ATP-binding</keyword>
<keyword id="KW-1003">Cell membrane</keyword>
<keyword id="KW-0472">Membrane</keyword>
<keyword id="KW-0547">Nucleotide-binding</keyword>
<keyword id="KW-0614">Plasmid</keyword>
<keyword id="KW-0677">Repeat</keyword>
<keyword id="KW-0762">Sugar transport</keyword>
<keyword id="KW-1278">Translocase</keyword>
<keyword id="KW-0813">Transport</keyword>
<gene>
    <name evidence="1" type="primary">rbsA</name>
    <name type="ordered locus">Dgeo_2458</name>
</gene>
<feature type="chain" id="PRO_0000261061" description="Ribose import ATP-binding protein RbsA">
    <location>
        <begin position="1"/>
        <end position="498"/>
    </location>
</feature>
<feature type="domain" description="ABC transporter 1" evidence="1">
    <location>
        <begin position="2"/>
        <end position="237"/>
    </location>
</feature>
<feature type="domain" description="ABC transporter 2" evidence="1">
    <location>
        <begin position="247"/>
        <end position="491"/>
    </location>
</feature>
<feature type="binding site" evidence="1">
    <location>
        <begin position="34"/>
        <end position="41"/>
    </location>
    <ligand>
        <name>ATP</name>
        <dbReference type="ChEBI" id="CHEBI:30616"/>
    </ligand>
</feature>
<proteinExistence type="inferred from homology"/>
<geneLocation type="plasmid">
    <name>pDGEO01</name>
</geneLocation>
<evidence type="ECO:0000255" key="1">
    <source>
        <dbReference type="HAMAP-Rule" id="MF_01716"/>
    </source>
</evidence>
<sequence>MLALQHASKSFGPVRALSDVSLELYSGEAHALLGENGAGKSTLVKILSGVHRADGGELWVDGQLRVFHSPAEARDAGIAIIYQEPTLFPDLTVAENVLMGRQPLRRGRIDRRAMLTHVGRILQELGVPLDPARPVRGLSIADQQLVEIAKALSFQARVLIMDEPTAALTGQETERLFRVVRTLRARGAAVLLITHRLEEAFAECQRFTIMRDGRWVSSGPAAAYTIDSVVRGMVGRDVRELYPKLPVTPGEVALEVRGLSRRGVFRDVSFVVRRGEIVGLAGLVGAGRSEVARSIFGIDPRDAGEVRVQGRTIPAGNTQAAMRAGIGLVPEDRRQQGLVMDLSIERNATLTVLNRLRRGWLMDRTAETQTASDWTSRLRLKAHRLTDPVSTLSGGNQQKVVLAKWLATGPAVLIVDEPTRGVDVGAKAEVHRTLAELAAGGLAVVMISSDLPEVLGMADRILVMREGALVGELSRQDASEEAVMYLATGQQPAIGSVA</sequence>
<reference key="1">
    <citation type="submission" date="2006-04" db="EMBL/GenBank/DDBJ databases">
        <title>Complete sequence of plasmid 1 of Deinococcus geothermalis DSM 11300.</title>
        <authorList>
            <person name="Copeland A."/>
            <person name="Lucas S."/>
            <person name="Lapidus A."/>
            <person name="Barry K."/>
            <person name="Detter J.C."/>
            <person name="Glavina del Rio T."/>
            <person name="Hammon N."/>
            <person name="Israni S."/>
            <person name="Dalin E."/>
            <person name="Tice H."/>
            <person name="Pitluck S."/>
            <person name="Brettin T."/>
            <person name="Bruce D."/>
            <person name="Han C."/>
            <person name="Tapia R."/>
            <person name="Saunders E."/>
            <person name="Gilna P."/>
            <person name="Schmutz J."/>
            <person name="Larimer F."/>
            <person name="Land M."/>
            <person name="Hauser L."/>
            <person name="Kyrpides N."/>
            <person name="Kim E."/>
            <person name="Daly M.J."/>
            <person name="Fredrickson J.K."/>
            <person name="Makarova K.S."/>
            <person name="Gaidamakova E.K."/>
            <person name="Zhai M."/>
            <person name="Richardson P."/>
        </authorList>
    </citation>
    <scope>NUCLEOTIDE SEQUENCE [LARGE SCALE GENOMIC DNA]</scope>
    <source>
        <strain>DSM 11300 / CIP 105573 / AG-3a</strain>
    </source>
</reference>
<accession>Q1J3P2</accession>
<organism>
    <name type="scientific">Deinococcus geothermalis (strain DSM 11300 / CIP 105573 / AG-3a)</name>
    <dbReference type="NCBI Taxonomy" id="319795"/>
    <lineage>
        <taxon>Bacteria</taxon>
        <taxon>Thermotogati</taxon>
        <taxon>Deinococcota</taxon>
        <taxon>Deinococci</taxon>
        <taxon>Deinococcales</taxon>
        <taxon>Deinococcaceae</taxon>
        <taxon>Deinococcus</taxon>
    </lineage>
</organism>
<protein>
    <recommendedName>
        <fullName evidence="1">Ribose import ATP-binding protein RbsA</fullName>
        <ecNumber evidence="1">7.5.2.7</ecNumber>
    </recommendedName>
</protein>
<name>RBSA_DEIGD</name>